<feature type="chain" id="PRO_0000123688" description="Isoprenyl transferase">
    <location>
        <begin position="1"/>
        <end position="259"/>
    </location>
</feature>
<feature type="active site" evidence="1">
    <location>
        <position position="33"/>
    </location>
</feature>
<feature type="active site" description="Proton acceptor" evidence="1">
    <location>
        <position position="82"/>
    </location>
</feature>
<feature type="binding site" evidence="1">
    <location>
        <position position="33"/>
    </location>
    <ligand>
        <name>Mg(2+)</name>
        <dbReference type="ChEBI" id="CHEBI:18420"/>
    </ligand>
</feature>
<feature type="binding site" evidence="1">
    <location>
        <begin position="34"/>
        <end position="37"/>
    </location>
    <ligand>
        <name>substrate</name>
    </ligand>
</feature>
<feature type="binding site" evidence="1">
    <location>
        <position position="38"/>
    </location>
    <ligand>
        <name>substrate</name>
    </ligand>
</feature>
<feature type="binding site" evidence="1">
    <location>
        <position position="51"/>
    </location>
    <ligand>
        <name>substrate</name>
    </ligand>
</feature>
<feature type="binding site" evidence="1">
    <location>
        <begin position="79"/>
        <end position="81"/>
    </location>
    <ligand>
        <name>substrate</name>
    </ligand>
</feature>
<feature type="binding site" evidence="1">
    <location>
        <position position="86"/>
    </location>
    <ligand>
        <name>substrate</name>
    </ligand>
</feature>
<feature type="binding site" evidence="1">
    <location>
        <position position="208"/>
    </location>
    <ligand>
        <name>substrate</name>
    </ligand>
</feature>
<feature type="binding site" evidence="1">
    <location>
        <begin position="214"/>
        <end position="216"/>
    </location>
    <ligand>
        <name>substrate</name>
    </ligand>
</feature>
<feature type="binding site" evidence="1">
    <location>
        <position position="227"/>
    </location>
    <ligand>
        <name>Mg(2+)</name>
        <dbReference type="ChEBI" id="CHEBI:18420"/>
    </ligand>
</feature>
<dbReference type="EC" id="2.5.1.-" evidence="1"/>
<dbReference type="EMBL" id="M29297">
    <property type="status" value="NOT_ANNOTATED_CDS"/>
    <property type="molecule type" value="Genomic_DNA"/>
</dbReference>
<dbReference type="GO" id="GO:0005886">
    <property type="term" value="C:plasma membrane"/>
    <property type="evidence" value="ECO:0007669"/>
    <property type="project" value="TreeGrafter"/>
</dbReference>
<dbReference type="GO" id="GO:0045547">
    <property type="term" value="F:ditrans,polycis-polyprenyl diphosphate synthase [(2E,6E)-farnesyl diphosphate specific] activity"/>
    <property type="evidence" value="ECO:0007669"/>
    <property type="project" value="TreeGrafter"/>
</dbReference>
<dbReference type="GO" id="GO:0000287">
    <property type="term" value="F:magnesium ion binding"/>
    <property type="evidence" value="ECO:0007669"/>
    <property type="project" value="UniProtKB-UniRule"/>
</dbReference>
<dbReference type="GO" id="GO:0033850">
    <property type="term" value="F:Z-farnesyl diphosphate synthase activity"/>
    <property type="evidence" value="ECO:0007669"/>
    <property type="project" value="TreeGrafter"/>
</dbReference>
<dbReference type="GO" id="GO:0016094">
    <property type="term" value="P:polyprenol biosynthetic process"/>
    <property type="evidence" value="ECO:0007669"/>
    <property type="project" value="TreeGrafter"/>
</dbReference>
<dbReference type="CDD" id="cd00475">
    <property type="entry name" value="Cis_IPPS"/>
    <property type="match status" value="1"/>
</dbReference>
<dbReference type="FunFam" id="3.40.1180.10:FF:000003">
    <property type="entry name" value="Isoprenyl transferase 2"/>
    <property type="match status" value="1"/>
</dbReference>
<dbReference type="Gene3D" id="3.40.1180.10">
    <property type="entry name" value="Decaprenyl diphosphate synthase-like"/>
    <property type="match status" value="1"/>
</dbReference>
<dbReference type="HAMAP" id="MF_01139">
    <property type="entry name" value="ISPT"/>
    <property type="match status" value="1"/>
</dbReference>
<dbReference type="InterPro" id="IPR001441">
    <property type="entry name" value="UPP_synth-like"/>
</dbReference>
<dbReference type="InterPro" id="IPR018520">
    <property type="entry name" value="UPP_synth-like_CS"/>
</dbReference>
<dbReference type="InterPro" id="IPR036424">
    <property type="entry name" value="UPP_synth-like_sf"/>
</dbReference>
<dbReference type="NCBIfam" id="TIGR00055">
    <property type="entry name" value="uppS"/>
    <property type="match status" value="1"/>
</dbReference>
<dbReference type="PANTHER" id="PTHR10291:SF43">
    <property type="entry name" value="DEHYDRODOLICHYL DIPHOSPHATE SYNTHASE COMPLEX SUBUNIT DHDDS"/>
    <property type="match status" value="1"/>
</dbReference>
<dbReference type="PANTHER" id="PTHR10291">
    <property type="entry name" value="DEHYDRODOLICHYL DIPHOSPHATE SYNTHASE FAMILY MEMBER"/>
    <property type="match status" value="1"/>
</dbReference>
<dbReference type="Pfam" id="PF01255">
    <property type="entry name" value="Prenyltransf"/>
    <property type="match status" value="1"/>
</dbReference>
<dbReference type="SUPFAM" id="SSF64005">
    <property type="entry name" value="Undecaprenyl diphosphate synthase"/>
    <property type="match status" value="1"/>
</dbReference>
<dbReference type="PROSITE" id="PS01066">
    <property type="entry name" value="UPP_SYNTHASE"/>
    <property type="match status" value="1"/>
</dbReference>
<name>ISPT_STRFR</name>
<proteinExistence type="inferred from homology"/>
<sequence>MRTADLFYALYARRLRRQTAAGPLPKHIGLIMDGNRRWARQMGMANPSIGHRYGAEHVESVLSWCETAGIKHVTVFVCSTENLQRRGDTEVSFLMQVIEQVVAVHLARPDARWQVRIAGTLDXPCADSTAHALKEAVEATRRCTTGSQVTLAIGYGGRQEVIDAVRELLHEQAAAGTTLEDLAASLTMDDITRHLYTAGQPDPDLVIRTSGEQRMSNFLLWQSAYSELYFCEAYWPAFREIDFLRALRSYAARQRRYGA</sequence>
<keyword id="KW-0460">Magnesium</keyword>
<keyword id="KW-0479">Metal-binding</keyword>
<keyword id="KW-0808">Transferase</keyword>
<comment type="function">
    <text evidence="1">Catalyzes the condensation of isopentenyl diphosphate (IPP) with allylic pyrophosphates generating different type of terpenoids.</text>
</comment>
<comment type="cofactor">
    <cofactor evidence="1">
        <name>Mg(2+)</name>
        <dbReference type="ChEBI" id="CHEBI:18420"/>
    </cofactor>
    <text evidence="1">Binds 2 magnesium ions per subunit.</text>
</comment>
<comment type="subunit">
    <text evidence="1">Homodimer.</text>
</comment>
<comment type="similarity">
    <text evidence="1">Belongs to the UPP synthase family.</text>
</comment>
<comment type="sequence caution" evidence="2">
    <conflict type="frameshift">
        <sequence resource="EMBL" id="M29297"/>
    </conflict>
</comment>
<accession>P20182</accession>
<evidence type="ECO:0000255" key="1">
    <source>
        <dbReference type="HAMAP-Rule" id="MF_01139"/>
    </source>
</evidence>
<evidence type="ECO:0000305" key="2"/>
<protein>
    <recommendedName>
        <fullName evidence="1">Isoprenyl transferase</fullName>
        <ecNumber evidence="1">2.5.1.-</ecNumber>
    </recommendedName>
</protein>
<reference key="1">
    <citation type="journal article" date="1990" name="Gene">
        <title>Nucleotide sequence of Streptomyces fradiae transposable element Tn4556: a class-II transposon related to Tn3.</title>
        <authorList>
            <person name="Siemieniak D.R."/>
            <person name="Slightom J.L."/>
            <person name="Chung S.T."/>
        </authorList>
    </citation>
    <scope>NUCLEOTIDE SEQUENCE [GENOMIC DNA]</scope>
    <source>
        <transposon>Tn4556</transposon>
    </source>
</reference>
<reference key="2">
    <citation type="journal article" date="1994" name="Yeast">
        <title>Sequence around the centromere of Saccharomyces cerevisiae chromosome II: similarity of CEN2 to CEN4.</title>
        <authorList>
            <person name="Wolfe K.H."/>
            <person name="Lohan A.J.E."/>
        </authorList>
    </citation>
    <scope>CONCEPTUAL TRANSLATION</scope>
</reference>
<gene>
    <name evidence="1" type="primary">uppS</name>
</gene>
<organism>
    <name type="scientific">Streptomyces fradiae</name>
    <name type="common">Streptomyces roseoflavus</name>
    <dbReference type="NCBI Taxonomy" id="1906"/>
    <lineage>
        <taxon>Bacteria</taxon>
        <taxon>Bacillati</taxon>
        <taxon>Actinomycetota</taxon>
        <taxon>Actinomycetes</taxon>
        <taxon>Kitasatosporales</taxon>
        <taxon>Streptomycetaceae</taxon>
        <taxon>Streptomyces</taxon>
    </lineage>
</organism>